<accession>Q6AYQ1</accession>
<proteinExistence type="evidence at transcript level"/>
<evidence type="ECO:0000250" key="1"/>
<evidence type="ECO:0000305" key="2"/>
<reference key="1">
    <citation type="journal article" date="2004" name="Genome Res.">
        <title>The status, quality, and expansion of the NIH full-length cDNA project: the Mammalian Gene Collection (MGC).</title>
        <authorList>
            <consortium name="The MGC Project Team"/>
        </authorList>
    </citation>
    <scope>NUCLEOTIDE SEQUENCE [LARGE SCALE MRNA]</scope>
    <source>
        <tissue>Kidney</tissue>
    </source>
</reference>
<feature type="chain" id="PRO_0000213979" description="Golgin subfamily A member 7">
    <location>
        <begin position="1"/>
        <end position="137"/>
    </location>
</feature>
<feature type="lipid moiety-binding region" description="S-palmitoyl cysteine" evidence="1">
    <location>
        <position position="69"/>
    </location>
</feature>
<feature type="lipid moiety-binding region" description="S-palmitoyl cysteine" evidence="1">
    <location>
        <position position="72"/>
    </location>
</feature>
<organism>
    <name type="scientific">Rattus norvegicus</name>
    <name type="common">Rat</name>
    <dbReference type="NCBI Taxonomy" id="10116"/>
    <lineage>
        <taxon>Eukaryota</taxon>
        <taxon>Metazoa</taxon>
        <taxon>Chordata</taxon>
        <taxon>Craniata</taxon>
        <taxon>Vertebrata</taxon>
        <taxon>Euteleostomi</taxon>
        <taxon>Mammalia</taxon>
        <taxon>Eutheria</taxon>
        <taxon>Euarchontoglires</taxon>
        <taxon>Glires</taxon>
        <taxon>Rodentia</taxon>
        <taxon>Myomorpha</taxon>
        <taxon>Muroidea</taxon>
        <taxon>Muridae</taxon>
        <taxon>Murinae</taxon>
        <taxon>Rattus</taxon>
    </lineage>
</organism>
<sequence length="137" mass="15778">MRPQQAPVSGKVFIQRDYSSGTRCQFQTKFPAELENRVDRQQFEETVRTLNNLYAEAEKLGGQSYLEGCLACLTAYTIFLCMETHYEKVLKKVSKYIQEQNEKIYAPQGLLLTDPIERGLRVIEITIYEDRGVSSGR</sequence>
<dbReference type="EMBL" id="BC078959">
    <property type="protein sequence ID" value="AAH78959.1"/>
    <property type="molecule type" value="mRNA"/>
</dbReference>
<dbReference type="RefSeq" id="NP_001007732.1">
    <property type="nucleotide sequence ID" value="NM_001007731.1"/>
</dbReference>
<dbReference type="RefSeq" id="XP_017455674.1">
    <property type="nucleotide sequence ID" value="XM_017600185.3"/>
</dbReference>
<dbReference type="RefSeq" id="XP_038950600.1">
    <property type="nucleotide sequence ID" value="XM_039094672.2"/>
</dbReference>
<dbReference type="SMR" id="Q6AYQ1"/>
<dbReference type="BioGRID" id="262489">
    <property type="interactions" value="1"/>
</dbReference>
<dbReference type="FunCoup" id="Q6AYQ1">
    <property type="interactions" value="4048"/>
</dbReference>
<dbReference type="STRING" id="10116.ENSRNOP00000033324"/>
<dbReference type="iPTMnet" id="Q6AYQ1"/>
<dbReference type="PhosphoSitePlus" id="Q6AYQ1"/>
<dbReference type="SwissPalm" id="Q6AYQ1"/>
<dbReference type="PaxDb" id="10116-ENSRNOP00000033324"/>
<dbReference type="GeneID" id="361171"/>
<dbReference type="KEGG" id="rno:361171"/>
<dbReference type="UCSC" id="RGD:1359725">
    <property type="organism name" value="rat"/>
</dbReference>
<dbReference type="AGR" id="RGD:1359725"/>
<dbReference type="CTD" id="51125"/>
<dbReference type="RGD" id="1359725">
    <property type="gene designation" value="Golga7"/>
</dbReference>
<dbReference type="VEuPathDB" id="HostDB:ENSRNOG00000017956"/>
<dbReference type="eggNOG" id="KOG4069">
    <property type="taxonomic scope" value="Eukaryota"/>
</dbReference>
<dbReference type="HOGENOM" id="CLU_130071_0_1_1"/>
<dbReference type="InParanoid" id="Q6AYQ1"/>
<dbReference type="OrthoDB" id="74751at9989"/>
<dbReference type="PhylomeDB" id="Q6AYQ1"/>
<dbReference type="TreeFam" id="TF313115"/>
<dbReference type="Reactome" id="R-RNO-6798695">
    <property type="pathway name" value="Neutrophil degranulation"/>
</dbReference>
<dbReference type="Reactome" id="R-RNO-9648002">
    <property type="pathway name" value="RAS processing"/>
</dbReference>
<dbReference type="PRO" id="PR:Q6AYQ1"/>
<dbReference type="Proteomes" id="UP000002494">
    <property type="component" value="Chromosome 16"/>
</dbReference>
<dbReference type="Bgee" id="ENSRNOG00000017956">
    <property type="expression patterns" value="Expressed in Ammon's horn and 20 other cell types or tissues"/>
</dbReference>
<dbReference type="GO" id="GO:0000139">
    <property type="term" value="C:Golgi membrane"/>
    <property type="evidence" value="ECO:0000250"/>
    <property type="project" value="CAFA"/>
</dbReference>
<dbReference type="GO" id="GO:0005795">
    <property type="term" value="C:Golgi stack"/>
    <property type="evidence" value="ECO:0000250"/>
    <property type="project" value="CAFA"/>
</dbReference>
<dbReference type="GO" id="GO:0002178">
    <property type="term" value="C:palmitoyltransferase complex"/>
    <property type="evidence" value="ECO:0000250"/>
    <property type="project" value="CAFA"/>
</dbReference>
<dbReference type="GO" id="GO:0043001">
    <property type="term" value="P:Golgi to plasma membrane protein transport"/>
    <property type="evidence" value="ECO:0000250"/>
    <property type="project" value="CAFA"/>
</dbReference>
<dbReference type="GO" id="GO:0006893">
    <property type="term" value="P:Golgi to plasma membrane transport"/>
    <property type="evidence" value="ECO:0000266"/>
    <property type="project" value="RGD"/>
</dbReference>
<dbReference type="GO" id="GO:0018230">
    <property type="term" value="P:peptidyl-L-cysteine S-palmitoylation"/>
    <property type="evidence" value="ECO:0000250"/>
    <property type="project" value="CAFA"/>
</dbReference>
<dbReference type="GO" id="GO:0050821">
    <property type="term" value="P:protein stabilization"/>
    <property type="evidence" value="ECO:0000250"/>
    <property type="project" value="CAFA"/>
</dbReference>
<dbReference type="GO" id="GO:0006612">
    <property type="term" value="P:protein targeting to membrane"/>
    <property type="evidence" value="ECO:0000318"/>
    <property type="project" value="GO_Central"/>
</dbReference>
<dbReference type="InterPro" id="IPR019383">
    <property type="entry name" value="Golgin_A_7/ERF4"/>
</dbReference>
<dbReference type="InterPro" id="IPR051371">
    <property type="entry name" value="Ras_palmitoyltransferase"/>
</dbReference>
<dbReference type="PANTHER" id="PTHR13254">
    <property type="entry name" value="GOLGI AUTOANTIGEN, GOLGIN SUBFAMILY A, 7"/>
    <property type="match status" value="1"/>
</dbReference>
<dbReference type="PANTHER" id="PTHR13254:SF1">
    <property type="entry name" value="GOLGIN SUBFAMILY A MEMBER 7"/>
    <property type="match status" value="1"/>
</dbReference>
<dbReference type="Pfam" id="PF10256">
    <property type="entry name" value="Erf4"/>
    <property type="match status" value="1"/>
</dbReference>
<name>GOGA7_RAT</name>
<gene>
    <name type="primary">Golga7</name>
</gene>
<keyword id="KW-0333">Golgi apparatus</keyword>
<keyword id="KW-0449">Lipoprotein</keyword>
<keyword id="KW-0472">Membrane</keyword>
<keyword id="KW-0564">Palmitate</keyword>
<keyword id="KW-1185">Reference proteome</keyword>
<protein>
    <recommendedName>
        <fullName>Golgin subfamily A member 7</fullName>
    </recommendedName>
</protein>
<comment type="function">
    <text evidence="1">May be involved in protein transport from Golgi to cell surface. The ZDHHC9-GOLGA7 complex is a palmitoyltransferase specific for HRAS and NRAS (By similarity).</text>
</comment>
<comment type="subunit">
    <text evidence="1">Interacts with GOLGA3. Interacts with ZDHHC9 (By similarity).</text>
</comment>
<comment type="subcellular location">
    <subcellularLocation>
        <location evidence="1">Golgi apparatus membrane</location>
        <topology evidence="1">Lipid-anchor</topology>
    </subcellularLocation>
</comment>
<comment type="PTM">
    <text evidence="1">Palmitoylated on Cys-69 and Cys-72; which is required for Golgi localization and interaction with GOLGA3.</text>
</comment>
<comment type="similarity">
    <text evidence="2">Belongs to the ERF4 family.</text>
</comment>